<organism>
    <name type="scientific">Pseudomonas syringae pv. syringae (strain B728a)</name>
    <dbReference type="NCBI Taxonomy" id="205918"/>
    <lineage>
        <taxon>Bacteria</taxon>
        <taxon>Pseudomonadati</taxon>
        <taxon>Pseudomonadota</taxon>
        <taxon>Gammaproteobacteria</taxon>
        <taxon>Pseudomonadales</taxon>
        <taxon>Pseudomonadaceae</taxon>
        <taxon>Pseudomonas</taxon>
        <taxon>Pseudomonas syringae</taxon>
    </lineage>
</organism>
<keyword id="KW-0285">Flavoprotein</keyword>
<keyword id="KW-0288">FMN</keyword>
<keyword id="KW-0503">Monooxygenase</keyword>
<keyword id="KW-0521">NADP</keyword>
<keyword id="KW-0560">Oxidoreductase</keyword>
<sequence length="360" mass="39585">MDIGIFIPIGNNGWLISSNAPQYMPTFELNKQIVQKAEGYGFDFALSMIKLRGFGGKTQFWEHNLESFTLMAGLAAVTSRIQLFATVATLTIPPAIAARMASTIDSISNGRFGINLVTGWQKPEYEQMGLWPGDEFFHTRYEYLAEYAQVLRDLWATGSSDFKGEHFSMQDCRVSPRPQADMKLICAGQSEAGMAFSAQYADYNFCFGKGVNTPTAFAPTAQKLLEANEKTGRNVTSCVLFMIIADDTDEAARARWEHIKDGADEEAIAWLSEKGSADKSAGSNLRQMADPTSAVNINMGTLVGSWATVARMLDEVASVPGTQGVMLTFDDFVKGVEDFGEKIQPLMTSRKHIAQLKEVV</sequence>
<reference key="1">
    <citation type="journal article" date="2005" name="Proc. Natl. Acad. Sci. U.S.A.">
        <title>Comparison of the complete genome sequences of Pseudomonas syringae pv. syringae B728a and pv. tomato DC3000.</title>
        <authorList>
            <person name="Feil H."/>
            <person name="Feil W.S."/>
            <person name="Chain P."/>
            <person name="Larimer F."/>
            <person name="Dibartolo G."/>
            <person name="Copeland A."/>
            <person name="Lykidis A."/>
            <person name="Trong S."/>
            <person name="Nolan M."/>
            <person name="Goltsman E."/>
            <person name="Thiel J."/>
            <person name="Malfatti S."/>
            <person name="Loper J.E."/>
            <person name="Lapidus A."/>
            <person name="Detter J.C."/>
            <person name="Land M."/>
            <person name="Richardson P.M."/>
            <person name="Kyrpides N.C."/>
            <person name="Ivanova N."/>
            <person name="Lindow S.E."/>
        </authorList>
    </citation>
    <scope>NUCLEOTIDE SEQUENCE [LARGE SCALE GENOMIC DNA]</scope>
    <source>
        <strain>B728a</strain>
    </source>
</reference>
<gene>
    <name evidence="1" type="primary">rutA</name>
    <name type="ordered locus">Psyr_0999</name>
</gene>
<comment type="function">
    <text evidence="1">Catalyzes the pyrimidine ring opening between N-3 and C-4 by an unusual flavin hydroperoxide-catalyzed mechanism, adding oxygen atoms in the process to yield ureidoacrylate peracid, that immediately reacts with FMN forming ureidoacrylate and FMN-N(5)-oxide. The FMN-N(5)-oxide reacts spontaneously with NADH to produce FMN. Requires the flavin reductase RutF to regenerate FMN in vivo.</text>
</comment>
<comment type="catalytic activity">
    <reaction evidence="1">
        <text>uracil + FMNH2 + NADH + O2 = (Z)-3-ureidoacrylate + FMN + NAD(+) + H2O + H(+)</text>
        <dbReference type="Rhea" id="RHEA:31587"/>
        <dbReference type="ChEBI" id="CHEBI:15377"/>
        <dbReference type="ChEBI" id="CHEBI:15378"/>
        <dbReference type="ChEBI" id="CHEBI:15379"/>
        <dbReference type="ChEBI" id="CHEBI:17568"/>
        <dbReference type="ChEBI" id="CHEBI:57540"/>
        <dbReference type="ChEBI" id="CHEBI:57618"/>
        <dbReference type="ChEBI" id="CHEBI:57945"/>
        <dbReference type="ChEBI" id="CHEBI:58210"/>
        <dbReference type="ChEBI" id="CHEBI:59891"/>
        <dbReference type="EC" id="1.14.99.46"/>
    </reaction>
</comment>
<comment type="catalytic activity">
    <reaction evidence="1">
        <text>thymine + FMNH2 + NADH + O2 = (Z)-2-methylureidoacrylate + FMN + NAD(+) + H2O + H(+)</text>
        <dbReference type="Rhea" id="RHEA:31599"/>
        <dbReference type="ChEBI" id="CHEBI:15377"/>
        <dbReference type="ChEBI" id="CHEBI:15378"/>
        <dbReference type="ChEBI" id="CHEBI:15379"/>
        <dbReference type="ChEBI" id="CHEBI:17821"/>
        <dbReference type="ChEBI" id="CHEBI:57540"/>
        <dbReference type="ChEBI" id="CHEBI:57618"/>
        <dbReference type="ChEBI" id="CHEBI:57945"/>
        <dbReference type="ChEBI" id="CHEBI:58210"/>
        <dbReference type="ChEBI" id="CHEBI:143783"/>
        <dbReference type="EC" id="1.14.99.46"/>
    </reaction>
</comment>
<comment type="similarity">
    <text evidence="1">Belongs to the NtaA/SnaA/DszA monooxygenase family. RutA subfamily.</text>
</comment>
<evidence type="ECO:0000255" key="1">
    <source>
        <dbReference type="HAMAP-Rule" id="MF_01699"/>
    </source>
</evidence>
<accession>Q4ZXR7</accession>
<name>RUTA_PSEU2</name>
<dbReference type="EC" id="1.14.99.46" evidence="1"/>
<dbReference type="EMBL" id="CP000075">
    <property type="protein sequence ID" value="AAY36055.1"/>
    <property type="molecule type" value="Genomic_DNA"/>
</dbReference>
<dbReference type="RefSeq" id="WP_003408718.1">
    <property type="nucleotide sequence ID" value="NC_007005.1"/>
</dbReference>
<dbReference type="RefSeq" id="YP_234093.1">
    <property type="nucleotide sequence ID" value="NC_007005.1"/>
</dbReference>
<dbReference type="SMR" id="Q4ZXR7"/>
<dbReference type="STRING" id="205918.Psyr_0999"/>
<dbReference type="KEGG" id="psb:Psyr_0999"/>
<dbReference type="PATRIC" id="fig|205918.7.peg.1028"/>
<dbReference type="eggNOG" id="COG2141">
    <property type="taxonomic scope" value="Bacteria"/>
</dbReference>
<dbReference type="HOGENOM" id="CLU_027853_1_1_6"/>
<dbReference type="OrthoDB" id="9814695at2"/>
<dbReference type="Proteomes" id="UP000000426">
    <property type="component" value="Chromosome"/>
</dbReference>
<dbReference type="GO" id="GO:0008726">
    <property type="term" value="F:alkanesulfonate monooxygenase activity"/>
    <property type="evidence" value="ECO:0007669"/>
    <property type="project" value="TreeGrafter"/>
</dbReference>
<dbReference type="GO" id="GO:0052614">
    <property type="term" value="F:uracil oxygenase activity"/>
    <property type="evidence" value="ECO:0007669"/>
    <property type="project" value="UniProtKB-EC"/>
</dbReference>
<dbReference type="GO" id="GO:0046306">
    <property type="term" value="P:alkanesulfonate catabolic process"/>
    <property type="evidence" value="ECO:0007669"/>
    <property type="project" value="TreeGrafter"/>
</dbReference>
<dbReference type="GO" id="GO:0019740">
    <property type="term" value="P:nitrogen utilization"/>
    <property type="evidence" value="ECO:0007669"/>
    <property type="project" value="UniProtKB-UniRule"/>
</dbReference>
<dbReference type="GO" id="GO:0006212">
    <property type="term" value="P:uracil catabolic process"/>
    <property type="evidence" value="ECO:0007669"/>
    <property type="project" value="UniProtKB-UniRule"/>
</dbReference>
<dbReference type="CDD" id="cd01094">
    <property type="entry name" value="Alkanesulfonate_monoxygenase"/>
    <property type="match status" value="1"/>
</dbReference>
<dbReference type="FunFam" id="3.20.20.30:FF:000003">
    <property type="entry name" value="Pyrimidine monooxygenase RutA"/>
    <property type="match status" value="1"/>
</dbReference>
<dbReference type="Gene3D" id="3.20.20.30">
    <property type="entry name" value="Luciferase-like domain"/>
    <property type="match status" value="1"/>
</dbReference>
<dbReference type="HAMAP" id="MF_01699">
    <property type="entry name" value="RutA"/>
    <property type="match status" value="1"/>
</dbReference>
<dbReference type="InterPro" id="IPR011251">
    <property type="entry name" value="Luciferase-like_dom"/>
</dbReference>
<dbReference type="InterPro" id="IPR036661">
    <property type="entry name" value="Luciferase-like_sf"/>
</dbReference>
<dbReference type="InterPro" id="IPR019914">
    <property type="entry name" value="Pyrimidine_monooxygenase_RutA"/>
</dbReference>
<dbReference type="InterPro" id="IPR050172">
    <property type="entry name" value="SsuD_RutA_monooxygenase"/>
</dbReference>
<dbReference type="NCBIfam" id="TIGR03612">
    <property type="entry name" value="RutA"/>
    <property type="match status" value="1"/>
</dbReference>
<dbReference type="PANTHER" id="PTHR42847">
    <property type="entry name" value="ALKANESULFONATE MONOOXYGENASE"/>
    <property type="match status" value="1"/>
</dbReference>
<dbReference type="PANTHER" id="PTHR42847:SF4">
    <property type="entry name" value="ALKANESULFONATE MONOOXYGENASE-RELATED"/>
    <property type="match status" value="1"/>
</dbReference>
<dbReference type="Pfam" id="PF00296">
    <property type="entry name" value="Bac_luciferase"/>
    <property type="match status" value="1"/>
</dbReference>
<dbReference type="SUPFAM" id="SSF51679">
    <property type="entry name" value="Bacterial luciferase-like"/>
    <property type="match status" value="1"/>
</dbReference>
<feature type="chain" id="PRO_0000402637" description="Pyrimidine monooxygenase RutA">
    <location>
        <begin position="1"/>
        <end position="360"/>
    </location>
</feature>
<feature type="binding site" evidence="1">
    <location>
        <begin position="49"/>
        <end position="50"/>
    </location>
    <ligand>
        <name>FMN</name>
        <dbReference type="ChEBI" id="CHEBI:58210"/>
    </ligand>
</feature>
<feature type="binding site" evidence="1">
    <location>
        <position position="115"/>
    </location>
    <ligand>
        <name>FMN</name>
        <dbReference type="ChEBI" id="CHEBI:58210"/>
    </ligand>
</feature>
<feature type="binding site" evidence="1">
    <location>
        <position position="124"/>
    </location>
    <ligand>
        <name>FMN</name>
        <dbReference type="ChEBI" id="CHEBI:58210"/>
    </ligand>
</feature>
<feature type="binding site" evidence="1">
    <location>
        <begin position="140"/>
        <end position="141"/>
    </location>
    <ligand>
        <name>FMN</name>
        <dbReference type="ChEBI" id="CHEBI:58210"/>
    </ligand>
</feature>
<feature type="binding site" evidence="1">
    <location>
        <position position="190"/>
    </location>
    <ligand>
        <name>FMN</name>
        <dbReference type="ChEBI" id="CHEBI:58210"/>
    </ligand>
</feature>
<protein>
    <recommendedName>
        <fullName evidence="1">Pyrimidine monooxygenase RutA</fullName>
        <ecNumber evidence="1">1.14.99.46</ecNumber>
    </recommendedName>
</protein>
<proteinExistence type="inferred from homology"/>